<protein>
    <recommendedName>
        <fullName evidence="1">Large ribosomal subunit protein uL3</fullName>
    </recommendedName>
    <alternativeName>
        <fullName evidence="2">50S ribosomal protein L3</fullName>
    </alternativeName>
</protein>
<reference key="1">
    <citation type="journal article" date="1994" name="J. Bacteriol.">
        <title>Phylogenetic depth of S10 and spc operons: cloning and sequencing of a ribosomal protein gene cluster from the extremely thermophilic bacterium Thermotoga maritima.</title>
        <authorList>
            <person name="Sanangelantoni A.M."/>
            <person name="Bocchetta M."/>
            <person name="Cammarano P."/>
            <person name="Tiboni O."/>
        </authorList>
    </citation>
    <scope>NUCLEOTIDE SEQUENCE [GENOMIC DNA]</scope>
    <source>
        <strain>ATCC 43589 / DSM 3109 / JCM 10099 / NBRC 100826 / MSB8</strain>
    </source>
</reference>
<reference key="2">
    <citation type="journal article" date="1999" name="Nature">
        <title>Evidence for lateral gene transfer between Archaea and Bacteria from genome sequence of Thermotoga maritima.</title>
        <authorList>
            <person name="Nelson K.E."/>
            <person name="Clayton R.A."/>
            <person name="Gill S.R."/>
            <person name="Gwinn M.L."/>
            <person name="Dodson R.J."/>
            <person name="Haft D.H."/>
            <person name="Hickey E.K."/>
            <person name="Peterson J.D."/>
            <person name="Nelson W.C."/>
            <person name="Ketchum K.A."/>
            <person name="McDonald L.A."/>
            <person name="Utterback T.R."/>
            <person name="Malek J.A."/>
            <person name="Linher K.D."/>
            <person name="Garrett M.M."/>
            <person name="Stewart A.M."/>
            <person name="Cotton M.D."/>
            <person name="Pratt M.S."/>
            <person name="Phillips C.A."/>
            <person name="Richardson D.L."/>
            <person name="Heidelberg J.F."/>
            <person name="Sutton G.G."/>
            <person name="Fleischmann R.D."/>
            <person name="Eisen J.A."/>
            <person name="White O."/>
            <person name="Salzberg S.L."/>
            <person name="Smith H.O."/>
            <person name="Venter J.C."/>
            <person name="Fraser C.M."/>
        </authorList>
    </citation>
    <scope>NUCLEOTIDE SEQUENCE [LARGE SCALE GENOMIC DNA]</scope>
    <source>
        <strain>ATCC 43589 / DSM 3109 / JCM 10099 / NBRC 100826 / MSB8</strain>
    </source>
</reference>
<proteinExistence type="inferred from homology"/>
<accession>P38515</accession>
<dbReference type="EMBL" id="Z21677">
    <property type="protein sequence ID" value="CAA79777.1"/>
    <property type="molecule type" value="Genomic_DNA"/>
</dbReference>
<dbReference type="EMBL" id="AE000512">
    <property type="protein sequence ID" value="AAD36566.1"/>
    <property type="molecule type" value="Genomic_DNA"/>
</dbReference>
<dbReference type="PIR" id="S40188">
    <property type="entry name" value="S40188"/>
</dbReference>
<dbReference type="RefSeq" id="NP_229300.1">
    <property type="nucleotide sequence ID" value="NC_000853.1"/>
</dbReference>
<dbReference type="RefSeq" id="WP_004081835.1">
    <property type="nucleotide sequence ID" value="NZ_CP011107.1"/>
</dbReference>
<dbReference type="SMR" id="P38515"/>
<dbReference type="FunCoup" id="P38515">
    <property type="interactions" value="411"/>
</dbReference>
<dbReference type="STRING" id="243274.TM_1500"/>
<dbReference type="PaxDb" id="243274-THEMA_06800"/>
<dbReference type="EnsemblBacteria" id="AAD36566">
    <property type="protein sequence ID" value="AAD36566"/>
    <property type="gene ID" value="TM_1500"/>
</dbReference>
<dbReference type="KEGG" id="tma:TM1500"/>
<dbReference type="KEGG" id="tmi:THEMA_06800"/>
<dbReference type="KEGG" id="tmm:Tmari_1508"/>
<dbReference type="KEGG" id="tmw:THMA_1532"/>
<dbReference type="eggNOG" id="COG0087">
    <property type="taxonomic scope" value="Bacteria"/>
</dbReference>
<dbReference type="InParanoid" id="P38515"/>
<dbReference type="OrthoDB" id="9806135at2"/>
<dbReference type="Proteomes" id="UP000008183">
    <property type="component" value="Chromosome"/>
</dbReference>
<dbReference type="GO" id="GO:0022625">
    <property type="term" value="C:cytosolic large ribosomal subunit"/>
    <property type="evidence" value="ECO:0000318"/>
    <property type="project" value="GO_Central"/>
</dbReference>
<dbReference type="GO" id="GO:0019843">
    <property type="term" value="F:rRNA binding"/>
    <property type="evidence" value="ECO:0007669"/>
    <property type="project" value="UniProtKB-UniRule"/>
</dbReference>
<dbReference type="GO" id="GO:0003735">
    <property type="term" value="F:structural constituent of ribosome"/>
    <property type="evidence" value="ECO:0000318"/>
    <property type="project" value="GO_Central"/>
</dbReference>
<dbReference type="GO" id="GO:0006412">
    <property type="term" value="P:translation"/>
    <property type="evidence" value="ECO:0007669"/>
    <property type="project" value="UniProtKB-UniRule"/>
</dbReference>
<dbReference type="FunFam" id="2.40.30.10:FF:000004">
    <property type="entry name" value="50S ribosomal protein L3"/>
    <property type="match status" value="1"/>
</dbReference>
<dbReference type="FunFam" id="3.30.160.810:FF:000001">
    <property type="entry name" value="50S ribosomal protein L3"/>
    <property type="match status" value="1"/>
</dbReference>
<dbReference type="Gene3D" id="3.30.160.810">
    <property type="match status" value="1"/>
</dbReference>
<dbReference type="Gene3D" id="2.40.30.10">
    <property type="entry name" value="Translation factors"/>
    <property type="match status" value="1"/>
</dbReference>
<dbReference type="HAMAP" id="MF_01325_B">
    <property type="entry name" value="Ribosomal_uL3_B"/>
    <property type="match status" value="1"/>
</dbReference>
<dbReference type="InterPro" id="IPR000597">
    <property type="entry name" value="Ribosomal_uL3"/>
</dbReference>
<dbReference type="InterPro" id="IPR019927">
    <property type="entry name" value="Ribosomal_uL3_bac/org-type"/>
</dbReference>
<dbReference type="InterPro" id="IPR019926">
    <property type="entry name" value="Ribosomal_uL3_CS"/>
</dbReference>
<dbReference type="InterPro" id="IPR009000">
    <property type="entry name" value="Transl_B-barrel_sf"/>
</dbReference>
<dbReference type="NCBIfam" id="TIGR03625">
    <property type="entry name" value="L3_bact"/>
    <property type="match status" value="1"/>
</dbReference>
<dbReference type="PANTHER" id="PTHR11229">
    <property type="entry name" value="50S RIBOSOMAL PROTEIN L3"/>
    <property type="match status" value="1"/>
</dbReference>
<dbReference type="PANTHER" id="PTHR11229:SF16">
    <property type="entry name" value="LARGE RIBOSOMAL SUBUNIT PROTEIN UL3C"/>
    <property type="match status" value="1"/>
</dbReference>
<dbReference type="Pfam" id="PF00297">
    <property type="entry name" value="Ribosomal_L3"/>
    <property type="match status" value="1"/>
</dbReference>
<dbReference type="SUPFAM" id="SSF50447">
    <property type="entry name" value="Translation proteins"/>
    <property type="match status" value="1"/>
</dbReference>
<dbReference type="PROSITE" id="PS00474">
    <property type="entry name" value="RIBOSOMAL_L3"/>
    <property type="match status" value="1"/>
</dbReference>
<evidence type="ECO:0000255" key="1">
    <source>
        <dbReference type="HAMAP-Rule" id="MF_01325"/>
    </source>
</evidence>
<evidence type="ECO:0000305" key="2"/>
<feature type="chain" id="PRO_0000077178" description="Large ribosomal subunit protein uL3">
    <location>
        <begin position="1"/>
        <end position="207"/>
    </location>
</feature>
<sequence>MKMIIGRKIGMTRVFVGNDSVPVTVIKAGPCVVVQKKTVEKDGYNAVQLGFEKAKKVNKPLAGHFKKFGVEPMKILREFRVENPDEYEPGQVIKVDVFEKGEYVDVTGWTKGRGFAGAMKRWGFSGGPKSHGSKFHRELGSVGQHTEPAKIWKGKKMPGRYGNERVTVRNLQVVDIDPENDLLVVKGGVPGARGGLVLIRSAKAPKK</sequence>
<name>RL3_THEMA</name>
<gene>
    <name evidence="1" type="primary">rplC</name>
    <name type="ordered locus">TM_1500</name>
</gene>
<keyword id="KW-1185">Reference proteome</keyword>
<keyword id="KW-0687">Ribonucleoprotein</keyword>
<keyword id="KW-0689">Ribosomal protein</keyword>
<keyword id="KW-0694">RNA-binding</keyword>
<keyword id="KW-0699">rRNA-binding</keyword>
<comment type="function">
    <text evidence="1">One of the primary rRNA binding proteins, it binds directly near the 3'-end of the 23S rRNA, where it nucleates assembly of the 50S subunit.</text>
</comment>
<comment type="subunit">
    <text evidence="1">Part of the 50S ribosomal subunit. Forms a cluster with proteins L14 and L19.</text>
</comment>
<comment type="similarity">
    <text evidence="1">Belongs to the universal ribosomal protein uL3 family.</text>
</comment>
<organism>
    <name type="scientific">Thermotoga maritima (strain ATCC 43589 / DSM 3109 / JCM 10099 / NBRC 100826 / MSB8)</name>
    <dbReference type="NCBI Taxonomy" id="243274"/>
    <lineage>
        <taxon>Bacteria</taxon>
        <taxon>Thermotogati</taxon>
        <taxon>Thermotogota</taxon>
        <taxon>Thermotogae</taxon>
        <taxon>Thermotogales</taxon>
        <taxon>Thermotogaceae</taxon>
        <taxon>Thermotoga</taxon>
    </lineage>
</organism>